<accession>C3KVT7</accession>
<gene>
    <name evidence="1" type="primary">murD</name>
    <name type="ordered locus">CLJ_B3840</name>
</gene>
<comment type="function">
    <text evidence="1">Cell wall formation. Catalyzes the addition of glutamate to the nucleotide precursor UDP-N-acetylmuramoyl-L-alanine (UMA).</text>
</comment>
<comment type="catalytic activity">
    <reaction evidence="1">
        <text>UDP-N-acetyl-alpha-D-muramoyl-L-alanine + D-glutamate + ATP = UDP-N-acetyl-alpha-D-muramoyl-L-alanyl-D-glutamate + ADP + phosphate + H(+)</text>
        <dbReference type="Rhea" id="RHEA:16429"/>
        <dbReference type="ChEBI" id="CHEBI:15378"/>
        <dbReference type="ChEBI" id="CHEBI:29986"/>
        <dbReference type="ChEBI" id="CHEBI:30616"/>
        <dbReference type="ChEBI" id="CHEBI:43474"/>
        <dbReference type="ChEBI" id="CHEBI:83898"/>
        <dbReference type="ChEBI" id="CHEBI:83900"/>
        <dbReference type="ChEBI" id="CHEBI:456216"/>
        <dbReference type="EC" id="6.3.2.9"/>
    </reaction>
</comment>
<comment type="pathway">
    <text evidence="1">Cell wall biogenesis; peptidoglycan biosynthesis.</text>
</comment>
<comment type="subcellular location">
    <subcellularLocation>
        <location evidence="1">Cytoplasm</location>
    </subcellularLocation>
</comment>
<comment type="similarity">
    <text evidence="1">Belongs to the MurCDEF family.</text>
</comment>
<reference key="1">
    <citation type="submission" date="2008-05" db="EMBL/GenBank/DDBJ databases">
        <title>Genome sequence of Clostridium botulinum Ba4 strain 657.</title>
        <authorList>
            <person name="Shrivastava S."/>
            <person name="Brown J.L."/>
            <person name="Bruce D."/>
            <person name="Detter C."/>
            <person name="Munk C."/>
            <person name="Smith L.A."/>
            <person name="Smith T.J."/>
            <person name="Sutton G."/>
            <person name="Brettin T.S."/>
        </authorList>
    </citation>
    <scope>NUCLEOTIDE SEQUENCE [LARGE SCALE GENOMIC DNA]</scope>
    <source>
        <strain>657 / Type Ba4</strain>
    </source>
</reference>
<keyword id="KW-0067">ATP-binding</keyword>
<keyword id="KW-0131">Cell cycle</keyword>
<keyword id="KW-0132">Cell division</keyword>
<keyword id="KW-0133">Cell shape</keyword>
<keyword id="KW-0961">Cell wall biogenesis/degradation</keyword>
<keyword id="KW-0963">Cytoplasm</keyword>
<keyword id="KW-0436">Ligase</keyword>
<keyword id="KW-0547">Nucleotide-binding</keyword>
<keyword id="KW-0573">Peptidoglycan synthesis</keyword>
<sequence>MKSNFSKFKDFIKYKKVAVVGIGVSNRPLIKFLVKLGAKVTAFDKKHREKLGSISLELEEIGVDLVLGENYLDKLDGYDVIFKTPSMRIDRPEFVKAKESGAYITSEMEEFIKYCPAKVFGITGSDGKTTTTTLVYEMLKKEGYRTWVGGNIGTPLFANIEEMKEDHMVVLELSSFQLMTMDVSPEISLITNLSPNHLDVHKDFEEYVWAKKNIFKYQSSNNLLVLNKDDDLTNGMENEALGDVLKFSLVEKVYNGAYLSNNKLTMQGKEVCDSKDIKLKGRHNIANLLAAFCMVNKYVSIDSMKYVATNFSGVEHRCEFIREVNGVKYYNDSIASSPSRTLAGLNSFERPVILIAGGYDKKIPFKPLAEGGYDKIKILILMGDTKNKIKSAFEKVISHKKCEIEIVIVNSMEEAVKVADNMAEKGDIITLSPACASFDMYPNFEIRGNEFKNIVNSL</sequence>
<evidence type="ECO:0000255" key="1">
    <source>
        <dbReference type="HAMAP-Rule" id="MF_00639"/>
    </source>
</evidence>
<organism>
    <name type="scientific">Clostridium botulinum (strain 657 / Type Ba4)</name>
    <dbReference type="NCBI Taxonomy" id="515621"/>
    <lineage>
        <taxon>Bacteria</taxon>
        <taxon>Bacillati</taxon>
        <taxon>Bacillota</taxon>
        <taxon>Clostridia</taxon>
        <taxon>Eubacteriales</taxon>
        <taxon>Clostridiaceae</taxon>
        <taxon>Clostridium</taxon>
    </lineage>
</organism>
<name>MURD_CLOB6</name>
<protein>
    <recommendedName>
        <fullName evidence="1">UDP-N-acetylmuramoylalanine--D-glutamate ligase</fullName>
        <ecNumber evidence="1">6.3.2.9</ecNumber>
    </recommendedName>
    <alternativeName>
        <fullName evidence="1">D-glutamic acid-adding enzyme</fullName>
    </alternativeName>
    <alternativeName>
        <fullName evidence="1">UDP-N-acetylmuramoyl-L-alanyl-D-glutamate synthetase</fullName>
    </alternativeName>
</protein>
<proteinExistence type="inferred from homology"/>
<feature type="chain" id="PRO_1000212370" description="UDP-N-acetylmuramoylalanine--D-glutamate ligase">
    <location>
        <begin position="1"/>
        <end position="458"/>
    </location>
</feature>
<feature type="binding site" evidence="1">
    <location>
        <begin position="124"/>
        <end position="130"/>
    </location>
    <ligand>
        <name>ATP</name>
        <dbReference type="ChEBI" id="CHEBI:30616"/>
    </ligand>
</feature>
<dbReference type="EC" id="6.3.2.9" evidence="1"/>
<dbReference type="EMBL" id="CP001083">
    <property type="protein sequence ID" value="ACQ52262.1"/>
    <property type="molecule type" value="Genomic_DNA"/>
</dbReference>
<dbReference type="RefSeq" id="WP_012720612.1">
    <property type="nucleotide sequence ID" value="NC_012658.1"/>
</dbReference>
<dbReference type="SMR" id="C3KVT7"/>
<dbReference type="KEGG" id="cbi:CLJ_B3840"/>
<dbReference type="HOGENOM" id="CLU_032540_0_1_9"/>
<dbReference type="UniPathway" id="UPA00219"/>
<dbReference type="Proteomes" id="UP000002333">
    <property type="component" value="Chromosome"/>
</dbReference>
<dbReference type="GO" id="GO:0005737">
    <property type="term" value="C:cytoplasm"/>
    <property type="evidence" value="ECO:0007669"/>
    <property type="project" value="UniProtKB-SubCell"/>
</dbReference>
<dbReference type="GO" id="GO:0005524">
    <property type="term" value="F:ATP binding"/>
    <property type="evidence" value="ECO:0007669"/>
    <property type="project" value="UniProtKB-UniRule"/>
</dbReference>
<dbReference type="GO" id="GO:0008764">
    <property type="term" value="F:UDP-N-acetylmuramoylalanine-D-glutamate ligase activity"/>
    <property type="evidence" value="ECO:0007669"/>
    <property type="project" value="UniProtKB-UniRule"/>
</dbReference>
<dbReference type="GO" id="GO:0051301">
    <property type="term" value="P:cell division"/>
    <property type="evidence" value="ECO:0007669"/>
    <property type="project" value="UniProtKB-KW"/>
</dbReference>
<dbReference type="GO" id="GO:0071555">
    <property type="term" value="P:cell wall organization"/>
    <property type="evidence" value="ECO:0007669"/>
    <property type="project" value="UniProtKB-KW"/>
</dbReference>
<dbReference type="GO" id="GO:0009252">
    <property type="term" value="P:peptidoglycan biosynthetic process"/>
    <property type="evidence" value="ECO:0007669"/>
    <property type="project" value="UniProtKB-UniRule"/>
</dbReference>
<dbReference type="GO" id="GO:0008360">
    <property type="term" value="P:regulation of cell shape"/>
    <property type="evidence" value="ECO:0007669"/>
    <property type="project" value="UniProtKB-KW"/>
</dbReference>
<dbReference type="Gene3D" id="3.90.190.20">
    <property type="entry name" value="Mur ligase, C-terminal domain"/>
    <property type="match status" value="1"/>
</dbReference>
<dbReference type="Gene3D" id="3.40.1190.10">
    <property type="entry name" value="Mur-like, catalytic domain"/>
    <property type="match status" value="1"/>
</dbReference>
<dbReference type="Gene3D" id="3.40.50.720">
    <property type="entry name" value="NAD(P)-binding Rossmann-like Domain"/>
    <property type="match status" value="1"/>
</dbReference>
<dbReference type="HAMAP" id="MF_00639">
    <property type="entry name" value="MurD"/>
    <property type="match status" value="1"/>
</dbReference>
<dbReference type="InterPro" id="IPR036565">
    <property type="entry name" value="Mur-like_cat_sf"/>
</dbReference>
<dbReference type="InterPro" id="IPR004101">
    <property type="entry name" value="Mur_ligase_C"/>
</dbReference>
<dbReference type="InterPro" id="IPR036615">
    <property type="entry name" value="Mur_ligase_C_dom_sf"/>
</dbReference>
<dbReference type="InterPro" id="IPR013221">
    <property type="entry name" value="Mur_ligase_cen"/>
</dbReference>
<dbReference type="InterPro" id="IPR005762">
    <property type="entry name" value="MurD"/>
</dbReference>
<dbReference type="NCBIfam" id="TIGR01087">
    <property type="entry name" value="murD"/>
    <property type="match status" value="1"/>
</dbReference>
<dbReference type="PANTHER" id="PTHR43692">
    <property type="entry name" value="UDP-N-ACETYLMURAMOYLALANINE--D-GLUTAMATE LIGASE"/>
    <property type="match status" value="1"/>
</dbReference>
<dbReference type="PANTHER" id="PTHR43692:SF1">
    <property type="entry name" value="UDP-N-ACETYLMURAMOYLALANINE--D-GLUTAMATE LIGASE"/>
    <property type="match status" value="1"/>
</dbReference>
<dbReference type="Pfam" id="PF02875">
    <property type="entry name" value="Mur_ligase_C"/>
    <property type="match status" value="1"/>
</dbReference>
<dbReference type="Pfam" id="PF08245">
    <property type="entry name" value="Mur_ligase_M"/>
    <property type="match status" value="1"/>
</dbReference>
<dbReference type="Pfam" id="PF21799">
    <property type="entry name" value="MurD-like_N"/>
    <property type="match status" value="1"/>
</dbReference>
<dbReference type="SUPFAM" id="SSF51984">
    <property type="entry name" value="MurCD N-terminal domain"/>
    <property type="match status" value="1"/>
</dbReference>
<dbReference type="SUPFAM" id="SSF53623">
    <property type="entry name" value="MurD-like peptide ligases, catalytic domain"/>
    <property type="match status" value="1"/>
</dbReference>
<dbReference type="SUPFAM" id="SSF53244">
    <property type="entry name" value="MurD-like peptide ligases, peptide-binding domain"/>
    <property type="match status" value="1"/>
</dbReference>